<proteinExistence type="inferred from homology"/>
<feature type="chain" id="PRO_0000374280" description="tRNA-2-methylthio-N(6)-dimethylallyladenosine synthase">
    <location>
        <begin position="1"/>
        <end position="446"/>
    </location>
</feature>
<feature type="domain" description="MTTase N-terminal" evidence="1">
    <location>
        <begin position="8"/>
        <end position="124"/>
    </location>
</feature>
<feature type="domain" description="Radical SAM core" evidence="2">
    <location>
        <begin position="146"/>
        <end position="378"/>
    </location>
</feature>
<feature type="domain" description="TRAM" evidence="1">
    <location>
        <begin position="381"/>
        <end position="442"/>
    </location>
</feature>
<feature type="binding site" evidence="1">
    <location>
        <position position="17"/>
    </location>
    <ligand>
        <name>[4Fe-4S] cluster</name>
        <dbReference type="ChEBI" id="CHEBI:49883"/>
        <label>1</label>
    </ligand>
</feature>
<feature type="binding site" evidence="1">
    <location>
        <position position="53"/>
    </location>
    <ligand>
        <name>[4Fe-4S] cluster</name>
        <dbReference type="ChEBI" id="CHEBI:49883"/>
        <label>1</label>
    </ligand>
</feature>
<feature type="binding site" evidence="1">
    <location>
        <position position="87"/>
    </location>
    <ligand>
        <name>[4Fe-4S] cluster</name>
        <dbReference type="ChEBI" id="CHEBI:49883"/>
        <label>1</label>
    </ligand>
</feature>
<feature type="binding site" evidence="1">
    <location>
        <position position="160"/>
    </location>
    <ligand>
        <name>[4Fe-4S] cluster</name>
        <dbReference type="ChEBI" id="CHEBI:49883"/>
        <label>2</label>
        <note>4Fe-4S-S-AdoMet</note>
    </ligand>
</feature>
<feature type="binding site" evidence="1">
    <location>
        <position position="164"/>
    </location>
    <ligand>
        <name>[4Fe-4S] cluster</name>
        <dbReference type="ChEBI" id="CHEBI:49883"/>
        <label>2</label>
        <note>4Fe-4S-S-AdoMet</note>
    </ligand>
</feature>
<feature type="binding site" evidence="1">
    <location>
        <position position="167"/>
    </location>
    <ligand>
        <name>[4Fe-4S] cluster</name>
        <dbReference type="ChEBI" id="CHEBI:49883"/>
        <label>2</label>
        <note>4Fe-4S-S-AdoMet</note>
    </ligand>
</feature>
<sequence>MKPTHSPKTYRVKSFGCQMNVYDGERMAEMLDEKGIEPAPEGEDADLVVLNTCHIREKAVDKVYSDIGRLTKGKTQTKAPMIAVAGCVAQAEGEEIMARAPAVSMVVGPQAYHRLPGMIDAAVAGKRSTDTDMPADAKFAALPKRRKSAPSAFLTIQEGCDKFCTYCVVPYTRGAEISRPFSALIDEAKKLVEAGAKEITLLGQNVSAWTGEDAKGRALGMAGLIRELAKDPDLKRVRYTTSHPADMDDELIATHGEVEKLMPYLHLPVQSGNDRVLKAMNRSHTAESYLRLLERFRAARPDLALSGDFIVGFPGETEAEFEDTLKIVDEVRYAQAYSFKYSPRPGTPAATMERQVPKEVMDERLQRLQAALNRDQAAFNAGSVGRTCEVLVERTGKHPGQWLGKSPWLQSVWFDGDVAIGDLVQVELVEAGPNSLAGQLLETVAA</sequence>
<evidence type="ECO:0000255" key="1">
    <source>
        <dbReference type="HAMAP-Rule" id="MF_01864"/>
    </source>
</evidence>
<evidence type="ECO:0000255" key="2">
    <source>
        <dbReference type="PROSITE-ProRule" id="PRU01266"/>
    </source>
</evidence>
<protein>
    <recommendedName>
        <fullName evidence="1">tRNA-2-methylthio-N(6)-dimethylallyladenosine synthase</fullName>
        <ecNumber evidence="1">2.8.4.3</ecNumber>
    </recommendedName>
    <alternativeName>
        <fullName evidence="1">(Dimethylallyl)adenosine tRNA methylthiotransferase MiaB</fullName>
    </alternativeName>
    <alternativeName>
        <fullName evidence="1">tRNA-i(6)A37 methylthiotransferase</fullName>
    </alternativeName>
</protein>
<keyword id="KW-0004">4Fe-4S</keyword>
<keyword id="KW-0963">Cytoplasm</keyword>
<keyword id="KW-0408">Iron</keyword>
<keyword id="KW-0411">Iron-sulfur</keyword>
<keyword id="KW-0479">Metal-binding</keyword>
<keyword id="KW-1185">Reference proteome</keyword>
<keyword id="KW-0949">S-adenosyl-L-methionine</keyword>
<keyword id="KW-0808">Transferase</keyword>
<keyword id="KW-0819">tRNA processing</keyword>
<gene>
    <name evidence="1" type="primary">miaB</name>
    <name type="ordered locus">ELI_08495</name>
</gene>
<dbReference type="EC" id="2.8.4.3" evidence="1"/>
<dbReference type="EMBL" id="CP000157">
    <property type="protein sequence ID" value="ABC63791.1"/>
    <property type="molecule type" value="Genomic_DNA"/>
</dbReference>
<dbReference type="RefSeq" id="WP_011414621.1">
    <property type="nucleotide sequence ID" value="NC_007722.1"/>
</dbReference>
<dbReference type="SMR" id="Q2N950"/>
<dbReference type="STRING" id="314225.ELI_08495"/>
<dbReference type="KEGG" id="eli:ELI_08495"/>
<dbReference type="eggNOG" id="COG0621">
    <property type="taxonomic scope" value="Bacteria"/>
</dbReference>
<dbReference type="HOGENOM" id="CLU_018697_2_0_5"/>
<dbReference type="OrthoDB" id="9805215at2"/>
<dbReference type="Proteomes" id="UP000008808">
    <property type="component" value="Chromosome"/>
</dbReference>
<dbReference type="GO" id="GO:0005829">
    <property type="term" value="C:cytosol"/>
    <property type="evidence" value="ECO:0007669"/>
    <property type="project" value="TreeGrafter"/>
</dbReference>
<dbReference type="GO" id="GO:0051539">
    <property type="term" value="F:4 iron, 4 sulfur cluster binding"/>
    <property type="evidence" value="ECO:0007669"/>
    <property type="project" value="UniProtKB-UniRule"/>
</dbReference>
<dbReference type="GO" id="GO:0046872">
    <property type="term" value="F:metal ion binding"/>
    <property type="evidence" value="ECO:0007669"/>
    <property type="project" value="UniProtKB-KW"/>
</dbReference>
<dbReference type="GO" id="GO:0035597">
    <property type="term" value="F:N6-isopentenyladenosine methylthiotransferase activity"/>
    <property type="evidence" value="ECO:0007669"/>
    <property type="project" value="TreeGrafter"/>
</dbReference>
<dbReference type="CDD" id="cd01335">
    <property type="entry name" value="Radical_SAM"/>
    <property type="match status" value="1"/>
</dbReference>
<dbReference type="FunFam" id="3.40.50.12160:FF:000003">
    <property type="entry name" value="CDK5 regulatory subunit-associated protein 1"/>
    <property type="match status" value="1"/>
</dbReference>
<dbReference type="FunFam" id="3.80.30.20:FF:000001">
    <property type="entry name" value="tRNA-2-methylthio-N(6)-dimethylallyladenosine synthase 2"/>
    <property type="match status" value="1"/>
</dbReference>
<dbReference type="Gene3D" id="3.40.50.12160">
    <property type="entry name" value="Methylthiotransferase, N-terminal domain"/>
    <property type="match status" value="1"/>
</dbReference>
<dbReference type="Gene3D" id="3.80.30.20">
    <property type="entry name" value="tm_1862 like domain"/>
    <property type="match status" value="1"/>
</dbReference>
<dbReference type="HAMAP" id="MF_01864">
    <property type="entry name" value="tRNA_metthiotr_MiaB"/>
    <property type="match status" value="1"/>
</dbReference>
<dbReference type="InterPro" id="IPR006638">
    <property type="entry name" value="Elp3/MiaA/NifB-like_rSAM"/>
</dbReference>
<dbReference type="InterPro" id="IPR005839">
    <property type="entry name" value="Methylthiotransferase"/>
</dbReference>
<dbReference type="InterPro" id="IPR020612">
    <property type="entry name" value="Methylthiotransferase_CS"/>
</dbReference>
<dbReference type="InterPro" id="IPR013848">
    <property type="entry name" value="Methylthiotransferase_N"/>
</dbReference>
<dbReference type="InterPro" id="IPR038135">
    <property type="entry name" value="Methylthiotransferase_N_sf"/>
</dbReference>
<dbReference type="InterPro" id="IPR006463">
    <property type="entry name" value="MiaB_methiolase"/>
</dbReference>
<dbReference type="InterPro" id="IPR007197">
    <property type="entry name" value="rSAM"/>
</dbReference>
<dbReference type="InterPro" id="IPR023404">
    <property type="entry name" value="rSAM_horseshoe"/>
</dbReference>
<dbReference type="InterPro" id="IPR002792">
    <property type="entry name" value="TRAM_dom"/>
</dbReference>
<dbReference type="NCBIfam" id="TIGR01574">
    <property type="entry name" value="miaB-methiolase"/>
    <property type="match status" value="1"/>
</dbReference>
<dbReference type="NCBIfam" id="TIGR00089">
    <property type="entry name" value="MiaB/RimO family radical SAM methylthiotransferase"/>
    <property type="match status" value="1"/>
</dbReference>
<dbReference type="PANTHER" id="PTHR43020">
    <property type="entry name" value="CDK5 REGULATORY SUBUNIT-ASSOCIATED PROTEIN 1"/>
    <property type="match status" value="1"/>
</dbReference>
<dbReference type="PANTHER" id="PTHR43020:SF2">
    <property type="entry name" value="MITOCHONDRIAL TRNA METHYLTHIOTRANSFERASE CDK5RAP1"/>
    <property type="match status" value="1"/>
</dbReference>
<dbReference type="Pfam" id="PF04055">
    <property type="entry name" value="Radical_SAM"/>
    <property type="match status" value="1"/>
</dbReference>
<dbReference type="Pfam" id="PF01938">
    <property type="entry name" value="TRAM"/>
    <property type="match status" value="1"/>
</dbReference>
<dbReference type="Pfam" id="PF00919">
    <property type="entry name" value="UPF0004"/>
    <property type="match status" value="1"/>
</dbReference>
<dbReference type="SFLD" id="SFLDF00273">
    <property type="entry name" value="(dimethylallyl)adenosine_tRNA"/>
    <property type="match status" value="1"/>
</dbReference>
<dbReference type="SFLD" id="SFLDG01082">
    <property type="entry name" value="B12-binding_domain_containing"/>
    <property type="match status" value="1"/>
</dbReference>
<dbReference type="SFLD" id="SFLDS00029">
    <property type="entry name" value="Radical_SAM"/>
    <property type="match status" value="1"/>
</dbReference>
<dbReference type="SMART" id="SM00729">
    <property type="entry name" value="Elp3"/>
    <property type="match status" value="1"/>
</dbReference>
<dbReference type="SUPFAM" id="SSF102114">
    <property type="entry name" value="Radical SAM enzymes"/>
    <property type="match status" value="1"/>
</dbReference>
<dbReference type="PROSITE" id="PS51449">
    <property type="entry name" value="MTTASE_N"/>
    <property type="match status" value="1"/>
</dbReference>
<dbReference type="PROSITE" id="PS01278">
    <property type="entry name" value="MTTASE_RADICAL"/>
    <property type="match status" value="1"/>
</dbReference>
<dbReference type="PROSITE" id="PS51918">
    <property type="entry name" value="RADICAL_SAM"/>
    <property type="match status" value="1"/>
</dbReference>
<dbReference type="PROSITE" id="PS50926">
    <property type="entry name" value="TRAM"/>
    <property type="match status" value="1"/>
</dbReference>
<comment type="function">
    <text evidence="1">Catalyzes the methylthiolation of N6-(dimethylallyl)adenosine (i(6)A), leading to the formation of 2-methylthio-N6-(dimethylallyl)adenosine (ms(2)i(6)A) at position 37 in tRNAs that read codons beginning with uridine.</text>
</comment>
<comment type="catalytic activity">
    <reaction evidence="1">
        <text>N(6)-dimethylallyladenosine(37) in tRNA + (sulfur carrier)-SH + AH2 + 2 S-adenosyl-L-methionine = 2-methylsulfanyl-N(6)-dimethylallyladenosine(37) in tRNA + (sulfur carrier)-H + 5'-deoxyadenosine + L-methionine + A + S-adenosyl-L-homocysteine + 2 H(+)</text>
        <dbReference type="Rhea" id="RHEA:37067"/>
        <dbReference type="Rhea" id="RHEA-COMP:10375"/>
        <dbReference type="Rhea" id="RHEA-COMP:10376"/>
        <dbReference type="Rhea" id="RHEA-COMP:14737"/>
        <dbReference type="Rhea" id="RHEA-COMP:14739"/>
        <dbReference type="ChEBI" id="CHEBI:13193"/>
        <dbReference type="ChEBI" id="CHEBI:15378"/>
        <dbReference type="ChEBI" id="CHEBI:17319"/>
        <dbReference type="ChEBI" id="CHEBI:17499"/>
        <dbReference type="ChEBI" id="CHEBI:29917"/>
        <dbReference type="ChEBI" id="CHEBI:57844"/>
        <dbReference type="ChEBI" id="CHEBI:57856"/>
        <dbReference type="ChEBI" id="CHEBI:59789"/>
        <dbReference type="ChEBI" id="CHEBI:64428"/>
        <dbReference type="ChEBI" id="CHEBI:74415"/>
        <dbReference type="ChEBI" id="CHEBI:74417"/>
        <dbReference type="EC" id="2.8.4.3"/>
    </reaction>
</comment>
<comment type="cofactor">
    <cofactor evidence="1">
        <name>[4Fe-4S] cluster</name>
        <dbReference type="ChEBI" id="CHEBI:49883"/>
    </cofactor>
    <text evidence="1">Binds 2 [4Fe-4S] clusters. One cluster is coordinated with 3 cysteines and an exchangeable S-adenosyl-L-methionine.</text>
</comment>
<comment type="subunit">
    <text evidence="1">Monomer.</text>
</comment>
<comment type="subcellular location">
    <subcellularLocation>
        <location evidence="1">Cytoplasm</location>
    </subcellularLocation>
</comment>
<comment type="similarity">
    <text evidence="1">Belongs to the methylthiotransferase family. MiaB subfamily.</text>
</comment>
<name>MIAB_ERYLH</name>
<reference key="1">
    <citation type="journal article" date="2009" name="J. Bacteriol.">
        <title>Complete genome sequence of Erythrobacter litoralis HTCC2594.</title>
        <authorList>
            <person name="Oh H.M."/>
            <person name="Giovannoni S.J."/>
            <person name="Ferriera S."/>
            <person name="Johnson J."/>
            <person name="Cho J.C."/>
        </authorList>
    </citation>
    <scope>NUCLEOTIDE SEQUENCE [LARGE SCALE GENOMIC DNA]</scope>
    <source>
        <strain>HTCC2594</strain>
    </source>
</reference>
<organism>
    <name type="scientific">Erythrobacter litoralis (strain HTCC2594)</name>
    <dbReference type="NCBI Taxonomy" id="314225"/>
    <lineage>
        <taxon>Bacteria</taxon>
        <taxon>Pseudomonadati</taxon>
        <taxon>Pseudomonadota</taxon>
        <taxon>Alphaproteobacteria</taxon>
        <taxon>Sphingomonadales</taxon>
        <taxon>Erythrobacteraceae</taxon>
        <taxon>Erythrobacter/Porphyrobacter group</taxon>
        <taxon>Erythrobacter</taxon>
    </lineage>
</organism>
<accession>Q2N950</accession>